<proteinExistence type="evidence at protein level"/>
<protein>
    <recommendedName>
        <fullName evidence="7">Protein mago nashi homolog 1</fullName>
        <shortName evidence="6">OsMAGO1</shortName>
    </recommendedName>
    <alternativeName>
        <fullName evidence="7">Mago nashi-like protein 1</fullName>
    </alternativeName>
</protein>
<gene>
    <name evidence="6" type="primary">MAGO1</name>
    <name evidence="10" type="ordered locus">Os08g0107900</name>
    <name evidence="9" type="ORF">P0450B04.29</name>
</gene>
<reference key="1">
    <citation type="journal article" date="2014" name="PLoS ONE">
        <title>Slow co-evolution of the MAGO and Y14 protein families is required for the maintenance of their obligate heterodimerization mode.</title>
        <authorList>
            <person name="Gong P."/>
            <person name="Zhao M."/>
            <person name="He C."/>
        </authorList>
    </citation>
    <scope>NUCLEOTIDE SEQUENCE [MRNA]</scope>
    <scope>INTERACTION WITH Y14A AND Y14B</scope>
</reference>
<reference key="2">
    <citation type="journal article" date="2005" name="Nature">
        <title>The map-based sequence of the rice genome.</title>
        <authorList>
            <consortium name="International rice genome sequencing project (IRGSP)"/>
        </authorList>
    </citation>
    <scope>NUCLEOTIDE SEQUENCE [LARGE SCALE GENOMIC DNA]</scope>
    <source>
        <strain>cv. Nipponbare</strain>
    </source>
</reference>
<reference key="3">
    <citation type="journal article" date="2008" name="Nucleic Acids Res.">
        <title>The rice annotation project database (RAP-DB): 2008 update.</title>
        <authorList>
            <consortium name="The rice annotation project (RAP)"/>
        </authorList>
    </citation>
    <scope>GENOME REANNOTATION</scope>
    <source>
        <strain>cv. Nipponbare</strain>
    </source>
</reference>
<reference key="4">
    <citation type="journal article" date="2013" name="Rice">
        <title>Improvement of the Oryza sativa Nipponbare reference genome using next generation sequence and optical map data.</title>
        <authorList>
            <person name="Kawahara Y."/>
            <person name="de la Bastide M."/>
            <person name="Hamilton J.P."/>
            <person name="Kanamori H."/>
            <person name="McCombie W.R."/>
            <person name="Ouyang S."/>
            <person name="Schwartz D.C."/>
            <person name="Tanaka T."/>
            <person name="Wu J."/>
            <person name="Zhou S."/>
            <person name="Childs K.L."/>
            <person name="Davidson R.M."/>
            <person name="Lin H."/>
            <person name="Quesada-Ocampo L."/>
            <person name="Vaillancourt B."/>
            <person name="Sakai H."/>
            <person name="Lee S.S."/>
            <person name="Kim J."/>
            <person name="Numa H."/>
            <person name="Itoh T."/>
            <person name="Buell C.R."/>
            <person name="Matsumoto T."/>
        </authorList>
    </citation>
    <scope>GENOME REANNOTATION</scope>
    <source>
        <strain>cv. Nipponbare</strain>
    </source>
</reference>
<reference key="5">
    <citation type="submission" date="2006-10" db="EMBL/GenBank/DDBJ databases">
        <title>Oryza sativa full length cDNA.</title>
        <authorList>
            <consortium name="The rice full-length cDNA consortium"/>
        </authorList>
    </citation>
    <scope>NUCLEOTIDE SEQUENCE [LARGE SCALE MRNA] (ISOFORM 2)</scope>
    <source>
        <strain>cv. Nipponbare</strain>
    </source>
</reference>
<reference key="6">
    <citation type="journal article" date="2014" name="Plant J.">
        <title>Targeting MAGO proteins with a peptide aptamer reinforces their essential roles in multiple rice developmental pathways.</title>
        <authorList>
            <person name="Gong P."/>
            <person name="Quan H."/>
            <person name="He C."/>
        </authorList>
    </citation>
    <scope>FUNCTION</scope>
    <scope>INTERACTION WITH Y14A AND Y14B</scope>
</reference>
<reference key="7">
    <citation type="journal article" date="2014" name="Plant Physiol.">
        <title>Uncovering divergence of rice exon junction complex core heterodimer gene duplication reveals their essential role in growth, development, and reproduction.</title>
        <authorList>
            <person name="Gong P."/>
            <person name="He C."/>
        </authorList>
    </citation>
    <scope>FUNCTION</scope>
    <scope>INTERACTION WITH Y14A AND Y14B</scope>
    <scope>SUBCELLULAR LOCATION</scope>
</reference>
<reference key="8">
    <citation type="journal article" date="2016" name="BMC Plant Biol.">
        <title>Two highly similar DEAD box proteins, OsRH2 and OsRH34, homologous to eukaryotic initiation factor 4AIII, play roles of the exon junction complex in regulating growth and development in rice.</title>
        <authorList>
            <person name="Huang C.K."/>
            <person name="Sie Y.S."/>
            <person name="Chen Y.F."/>
            <person name="Huang T.S."/>
            <person name="Lu C.A."/>
        </authorList>
    </citation>
    <scope>INTERACTION WITH EIF4A3/RH2 AND RH34</scope>
</reference>
<dbReference type="EMBL" id="KF051011">
    <property type="protein sequence ID" value="AHX83797.1"/>
    <property type="molecule type" value="mRNA"/>
</dbReference>
<dbReference type="EMBL" id="AP004462">
    <property type="protein sequence ID" value="BAD09395.1"/>
    <property type="status" value="ALT_SEQ"/>
    <property type="molecule type" value="Genomic_DNA"/>
</dbReference>
<dbReference type="EMBL" id="AP008214">
    <property type="protein sequence ID" value="BAF22716.2"/>
    <property type="status" value="ALT_INIT"/>
    <property type="molecule type" value="Genomic_DNA"/>
</dbReference>
<dbReference type="EMBL" id="AP014964">
    <property type="protein sequence ID" value="BAT03470.1"/>
    <property type="molecule type" value="Genomic_DNA"/>
</dbReference>
<dbReference type="EMBL" id="AP014964">
    <property type="protein sequence ID" value="BAT03471.1"/>
    <property type="molecule type" value="Genomic_DNA"/>
</dbReference>
<dbReference type="EMBL" id="AK243376">
    <property type="protein sequence ID" value="BAH01570.1"/>
    <property type="molecule type" value="mRNA"/>
</dbReference>
<dbReference type="RefSeq" id="XP_015650605.1">
    <property type="nucleotide sequence ID" value="XM_015795119.1"/>
</dbReference>
<dbReference type="SMR" id="A0A0P0XB70"/>
<dbReference type="FunCoup" id="A0A0P0XB70">
    <property type="interactions" value="3344"/>
</dbReference>
<dbReference type="STRING" id="39947.A0A0P0XB70"/>
<dbReference type="PaxDb" id="39947-A0A0P0XB70"/>
<dbReference type="EnsemblPlants" id="Os08t0107900-02">
    <molecule id="A0A0P0XB70-1"/>
    <property type="protein sequence ID" value="Os08t0107900-02"/>
    <property type="gene ID" value="Os08g0107900"/>
</dbReference>
<dbReference type="Gramene" id="Os08t0107900-02">
    <molecule id="A0A0P0XB70-1"/>
    <property type="protein sequence ID" value="Os08t0107900-02"/>
    <property type="gene ID" value="Os08g0107900"/>
</dbReference>
<dbReference type="KEGG" id="dosa:Os08g0107900"/>
<dbReference type="InParanoid" id="A0A0P0XB70"/>
<dbReference type="OrthoDB" id="6495301at2759"/>
<dbReference type="Proteomes" id="UP000000763">
    <property type="component" value="Chromosome 8"/>
</dbReference>
<dbReference type="Proteomes" id="UP000059680">
    <property type="component" value="Chromosome 8"/>
</dbReference>
<dbReference type="GO" id="GO:0005737">
    <property type="term" value="C:cytoplasm"/>
    <property type="evidence" value="ECO:0007669"/>
    <property type="project" value="UniProtKB-SubCell"/>
</dbReference>
<dbReference type="GO" id="GO:0035145">
    <property type="term" value="C:exon-exon junction complex"/>
    <property type="evidence" value="ECO:0000318"/>
    <property type="project" value="GO_Central"/>
</dbReference>
<dbReference type="GO" id="GO:0003723">
    <property type="term" value="F:RNA binding"/>
    <property type="evidence" value="ECO:0007669"/>
    <property type="project" value="UniProtKB-KW"/>
</dbReference>
<dbReference type="GO" id="GO:0006397">
    <property type="term" value="P:mRNA processing"/>
    <property type="evidence" value="ECO:0007669"/>
    <property type="project" value="UniProtKB-KW"/>
</dbReference>
<dbReference type="GO" id="GO:0051028">
    <property type="term" value="P:mRNA transport"/>
    <property type="evidence" value="ECO:0007669"/>
    <property type="project" value="UniProtKB-KW"/>
</dbReference>
<dbReference type="GO" id="GO:0000184">
    <property type="term" value="P:nuclear-transcribed mRNA catabolic process, nonsense-mediated decay"/>
    <property type="evidence" value="ECO:0007669"/>
    <property type="project" value="UniProtKB-KW"/>
</dbReference>
<dbReference type="GO" id="GO:0006417">
    <property type="term" value="P:regulation of translation"/>
    <property type="evidence" value="ECO:0007669"/>
    <property type="project" value="UniProtKB-KW"/>
</dbReference>
<dbReference type="GO" id="GO:0008380">
    <property type="term" value="P:RNA splicing"/>
    <property type="evidence" value="ECO:0000318"/>
    <property type="project" value="GO_Central"/>
</dbReference>
<dbReference type="CDD" id="cd11295">
    <property type="entry name" value="Mago_nashi"/>
    <property type="match status" value="1"/>
</dbReference>
<dbReference type="FunFam" id="3.30.1560.10:FF:000001">
    <property type="entry name" value="Protein mago nashi homolog"/>
    <property type="match status" value="1"/>
</dbReference>
<dbReference type="Gene3D" id="3.30.1560.10">
    <property type="entry name" value="Mago nashi"/>
    <property type="match status" value="1"/>
</dbReference>
<dbReference type="InterPro" id="IPR004023">
    <property type="entry name" value="Mago_nashi"/>
</dbReference>
<dbReference type="InterPro" id="IPR036605">
    <property type="entry name" value="Mago_nashi_sf"/>
</dbReference>
<dbReference type="PANTHER" id="PTHR12638:SF0">
    <property type="entry name" value="MAGO HOMOLOG, EXON JUNCTION COMPLEX SUBUNIT-RELATED"/>
    <property type="match status" value="1"/>
</dbReference>
<dbReference type="PANTHER" id="PTHR12638">
    <property type="entry name" value="PROTEIN MAGO NASHI HOMOLOG"/>
    <property type="match status" value="1"/>
</dbReference>
<dbReference type="Pfam" id="PF02792">
    <property type="entry name" value="Mago_nashi"/>
    <property type="match status" value="1"/>
</dbReference>
<dbReference type="SUPFAM" id="SSF89817">
    <property type="entry name" value="Mago nashi protein"/>
    <property type="match status" value="1"/>
</dbReference>
<name>MGN1_ORYSJ</name>
<accession>A0A0P0XB70</accession>
<accession>A0A023T664</accession>
<accession>B7FAC2</accession>
<accession>Q0J8J9</accession>
<accession>Q6ZD65</accession>
<evidence type="ECO:0000250" key="1">
    <source>
        <dbReference type="UniProtKB" id="P61326"/>
    </source>
</evidence>
<evidence type="ECO:0000269" key="2">
    <source>
    </source>
</evidence>
<evidence type="ECO:0000269" key="3">
    <source>
    </source>
</evidence>
<evidence type="ECO:0000269" key="4">
    <source>
    </source>
</evidence>
<evidence type="ECO:0000269" key="5">
    <source>
    </source>
</evidence>
<evidence type="ECO:0000303" key="6">
    <source>
    </source>
</evidence>
<evidence type="ECO:0000305" key="7"/>
<evidence type="ECO:0000305" key="8">
    <source>
    </source>
</evidence>
<evidence type="ECO:0000312" key="9">
    <source>
        <dbReference type="EMBL" id="BAD09395.1"/>
    </source>
</evidence>
<evidence type="ECO:0000312" key="10">
    <source>
        <dbReference type="EMBL" id="BAT03470.1"/>
    </source>
</evidence>
<feature type="chain" id="PRO_0000440127" description="Protein mago nashi homolog 1">
    <location>
        <begin position="1"/>
        <end position="158"/>
    </location>
</feature>
<feature type="splice variant" id="VSP_058951" description="In isoform 2.">
    <original>E</original>
    <variation>EMGLVYILQ</variation>
    <location>
        <position position="78"/>
    </location>
</feature>
<feature type="splice variant" id="VSP_058952" description="In isoform 2.">
    <original>DLKCFVFSLINLHFKIKPIQ</original>
    <variation>VPLPTLCLSQITQGSIA</variation>
    <location>
        <begin position="138"/>
        <end position="157"/>
    </location>
</feature>
<feature type="sequence conflict" description="In Ref. 1; AHX83797." evidence="7" ref="1">
    <location>
        <begin position="9"/>
        <end position="10"/>
    </location>
</feature>
<comment type="function">
    <text evidence="1 3 4">Core component of the splicing-dependent multiprotein exon junction complex (EJC) deposited at splice junctions on mRNAs. The EJC is a dynamic structure consisting of core proteins and several peripheral nuclear and cytoplasmic associated factors that join the complex only transiently either during EJC assembly or during subsequent mRNA metabolism. The EJC marks the position of the exon-exon junction in the mature mRNA for the gene expression machinery and the core components remain bound to spliced mRNAs throughout all stages of mRNA metabolism thereby influencing downstream processes including nuclear mRNA export, subcellular mRNA localization, translation efficiency and nonsense-mediated mRNA decay (NMD). The MAGO-Y14 heterodimer inhibits the ATPase activity of EIF4A3, thereby trapping the ATP-bound EJC core onto spliced mRNA in a stable conformation. The MAGO-Y14 heterodimer interacts with the EJC key regulator PYM leading to EJC disassembly in the cytoplasm (By similarity). EJC core heterodimers play essential roles in plant growth and development, and pollen and seed development (PubMed:24820023, PubMed:25230811). The MAGO-Y14 heterodimer selectively binds to the UDT1 (UNDEVELOPED TAPETUM 1) pre-mRNA transcript and regulates the splicing of UDT1, a key regulator in stamen development (PubMed:24820023).</text>
</comment>
<comment type="subunit">
    <text evidence="2 3 4 5 8">Heterodimers with Y14A and Y14B (PubMed:24416299, PubMed:24820023, PubMed:25230811). Interacts with EIF4A3/RH2 and RH34 (PubMed:27071313). Part of the mRNA splicing-dependent exon junction complex (EJC); the core complex contains MLN51/CASC3, EIF4A3, MAGO and Y14 (Probable).</text>
</comment>
<comment type="subcellular location">
    <subcellularLocation>
        <location evidence="3">Nucleus</location>
    </subcellularLocation>
    <subcellularLocation>
        <location evidence="1">Cytoplasm</location>
    </subcellularLocation>
    <text evidence="1">Nucleocytoplasmic shuttling protein. Travels to the cytoplasm as part of the exon junction complex (EJC) bound to mRNA.</text>
</comment>
<comment type="alternative products">
    <event type="alternative splicing"/>
    <isoform>
        <id>A0A0P0XB70-1</id>
        <name>1</name>
        <sequence type="displayed"/>
    </isoform>
    <isoform>
        <id>A0A0P0XB70-2</id>
        <name>2</name>
        <sequence type="described" ref="VSP_058951 VSP_058952"/>
    </isoform>
</comment>
<comment type="induction">
    <text evidence="3">Induced by gibberellin, abscisic acid (ABA), auxin, brassinosteroid, heat shock, salt stress and osmotic stress.</text>
</comment>
<comment type="similarity">
    <text evidence="7">Belongs to the mago nashi family.</text>
</comment>
<comment type="sequence caution" evidence="7">
    <conflict type="erroneous gene model prediction">
        <sequence resource="EMBL-CDS" id="BAD09395"/>
    </conflict>
</comment>
<comment type="sequence caution" evidence="7">
    <conflict type="erroneous initiation">
        <sequence resource="EMBL-CDS" id="BAF22716"/>
    </conflict>
    <text>Extended N-terminus.</text>
</comment>
<organism>
    <name type="scientific">Oryza sativa subsp. japonica</name>
    <name type="common">Rice</name>
    <dbReference type="NCBI Taxonomy" id="39947"/>
    <lineage>
        <taxon>Eukaryota</taxon>
        <taxon>Viridiplantae</taxon>
        <taxon>Streptophyta</taxon>
        <taxon>Embryophyta</taxon>
        <taxon>Tracheophyta</taxon>
        <taxon>Spermatophyta</taxon>
        <taxon>Magnoliopsida</taxon>
        <taxon>Liliopsida</taxon>
        <taxon>Poales</taxon>
        <taxon>Poaceae</taxon>
        <taxon>BOP clade</taxon>
        <taxon>Oryzoideae</taxon>
        <taxon>Oryzeae</taxon>
        <taxon>Oryzinae</taxon>
        <taxon>Oryza</taxon>
        <taxon>Oryza sativa</taxon>
    </lineage>
</organism>
<sequence length="158" mass="18189">MATVAGDDGGGGGEFYLRYYVGHKGKFGHEFLEFEFRPDGKLRYANNSNYKKDTMIRKEVFVSPSVLREATRIIHESEIMKEDDSNWPEPDRVGRQELEIVMGNEHISFTTSKIGSLVDVQTSKDPEGLRIFYYLVQDLKCFVFSLINLHFKIKPIQS</sequence>
<keyword id="KW-0025">Alternative splicing</keyword>
<keyword id="KW-0963">Cytoplasm</keyword>
<keyword id="KW-0507">mRNA processing</keyword>
<keyword id="KW-0508">mRNA splicing</keyword>
<keyword id="KW-0509">mRNA transport</keyword>
<keyword id="KW-0866">Nonsense-mediated mRNA decay</keyword>
<keyword id="KW-0539">Nucleus</keyword>
<keyword id="KW-1185">Reference proteome</keyword>
<keyword id="KW-0694">RNA-binding</keyword>
<keyword id="KW-0810">Translation regulation</keyword>
<keyword id="KW-0813">Transport</keyword>